<proteinExistence type="predicted"/>
<organismHost>
    <name type="scientific">Acheta domesticus</name>
    <name type="common">House cricket</name>
    <dbReference type="NCBI Taxonomy" id="6997"/>
</organismHost>
<organismHost>
    <name type="scientific">Chilo suppressalis</name>
    <name type="common">Asiatic rice borer moth</name>
    <dbReference type="NCBI Taxonomy" id="168631"/>
</organismHost>
<organismHost>
    <name type="scientific">Gryllus bimaculatus</name>
    <name type="common">Two-spotted cricket</name>
    <dbReference type="NCBI Taxonomy" id="6999"/>
</organismHost>
<organismHost>
    <name type="scientific">Gryllus campestris</name>
    <dbReference type="NCBI Taxonomy" id="58607"/>
</organismHost>
<organismHost>
    <name type="scientific">Spodoptera frugiperda</name>
    <name type="common">Fall armyworm</name>
    <dbReference type="NCBI Taxonomy" id="7108"/>
</organismHost>
<keyword id="KW-0238">DNA-binding</keyword>
<keyword id="KW-1048">Host nucleus</keyword>
<keyword id="KW-1185">Reference proteome</keyword>
<keyword id="KW-0677">Repeat</keyword>
<comment type="subcellular location">
    <subcellularLocation>
        <location evidence="2">Host nucleus</location>
    </subcellularLocation>
</comment>
<dbReference type="EMBL" id="L22300">
    <property type="protein sequence ID" value="AAA17843.1"/>
    <property type="molecule type" value="Unassigned_DNA"/>
</dbReference>
<dbReference type="EMBL" id="AF303741">
    <property type="protein sequence ID" value="AAK82261.1"/>
    <property type="molecule type" value="Genomic_DNA"/>
</dbReference>
<dbReference type="PIR" id="S71905">
    <property type="entry name" value="S71905"/>
</dbReference>
<dbReference type="RefSeq" id="NP_149864.1">
    <property type="nucleotide sequence ID" value="NC_003038.1"/>
</dbReference>
<dbReference type="SMR" id="P40628"/>
<dbReference type="KEGG" id="vg:1733017"/>
<dbReference type="OrthoDB" id="10798at10239"/>
<dbReference type="Proteomes" id="UP000001359">
    <property type="component" value="Genome"/>
</dbReference>
<dbReference type="GO" id="GO:0042025">
    <property type="term" value="C:host cell nucleus"/>
    <property type="evidence" value="ECO:0007669"/>
    <property type="project" value="UniProtKB-SubCell"/>
</dbReference>
<dbReference type="GO" id="GO:0003677">
    <property type="term" value="F:DNA binding"/>
    <property type="evidence" value="ECO:0007669"/>
    <property type="project" value="UniProtKB-KW"/>
</dbReference>
<dbReference type="Gene3D" id="1.10.30.10">
    <property type="entry name" value="High mobility group box domain"/>
    <property type="match status" value="2"/>
</dbReference>
<dbReference type="InterPro" id="IPR009071">
    <property type="entry name" value="HMG_box_dom"/>
</dbReference>
<dbReference type="InterPro" id="IPR036910">
    <property type="entry name" value="HMG_box_dom_sf"/>
</dbReference>
<dbReference type="InterPro" id="IPR050342">
    <property type="entry name" value="HMGB"/>
</dbReference>
<dbReference type="PANTHER" id="PTHR48112">
    <property type="entry name" value="HIGH MOBILITY GROUP PROTEIN DSP1"/>
    <property type="match status" value="1"/>
</dbReference>
<dbReference type="Pfam" id="PF00505">
    <property type="entry name" value="HMG_box"/>
    <property type="match status" value="1"/>
</dbReference>
<dbReference type="SMART" id="SM00398">
    <property type="entry name" value="HMG"/>
    <property type="match status" value="2"/>
</dbReference>
<dbReference type="SUPFAM" id="SSF47095">
    <property type="entry name" value="HMG-box"/>
    <property type="match status" value="2"/>
</dbReference>
<dbReference type="PROSITE" id="PS50118">
    <property type="entry name" value="HMG_BOX_2"/>
    <property type="match status" value="2"/>
</dbReference>
<reference key="1">
    <citation type="journal article" date="1994" name="Nucleic Acids Res.">
        <title>Identification of genes encoding zinc finger proteins, non-histone chromosomal HMG protein homologue, and a putative GTP phosphohydrolase in the genome of Chilo iridescent virus.</title>
        <authorList>
            <person name="Schnitzler P."/>
            <person name="Hug M."/>
            <person name="Handermann M."/>
            <person name="Janssen W."/>
            <person name="Koonin E.V."/>
            <person name="Delius H."/>
            <person name="Darai C."/>
        </authorList>
    </citation>
    <scope>NUCLEOTIDE SEQUENCE</scope>
</reference>
<reference key="2">
    <citation type="journal article" date="2001" name="Virology">
        <title>Analysis of the first complete DNA sequence of an invertebrate iridovirus: coding strategy of the genome of Chilo iridescent virus.</title>
        <authorList>
            <person name="Jakob N.J."/>
            <person name="Mueller K."/>
            <person name="Bahr U."/>
            <person name="Darai G."/>
        </authorList>
    </citation>
    <scope>NUCLEOTIDE SEQUENCE [LARGE SCALE GENOMIC DNA]</scope>
</reference>
<accession>P40628</accession>
<accession>Q91FC4</accession>
<protein>
    <recommendedName>
        <fullName>High mobility group protein homolog</fullName>
    </recommendedName>
</protein>
<evidence type="ECO:0000255" key="1">
    <source>
        <dbReference type="PROSITE-ProRule" id="PRU00267"/>
    </source>
</evidence>
<evidence type="ECO:0000305" key="2"/>
<gene>
    <name type="primary">EF1</name>
    <name type="ordered locus">401R</name>
</gene>
<name>HMGH_IIV6</name>
<organism>
    <name type="scientific">Invertebrate iridescent virus 6</name>
    <name type="common">IIV-6</name>
    <name type="synonym">Chilo iridescent virus</name>
    <dbReference type="NCBI Taxonomy" id="176652"/>
    <lineage>
        <taxon>Viruses</taxon>
        <taxon>Varidnaviria</taxon>
        <taxon>Bamfordvirae</taxon>
        <taxon>Nucleocytoviricota</taxon>
        <taxon>Megaviricetes</taxon>
        <taxon>Pimascovirales</taxon>
        <taxon>Iridoviridae</taxon>
        <taxon>Betairidovirinae</taxon>
        <taxon>Iridovirus</taxon>
    </lineage>
</organism>
<sequence length="242" mass="28182">MKSKKELMDALNKLVITEICSIFPDIQRVWEDQEFQKKFASTIGVKPKDVTNVPKRNKSSYLFFCQEIRPSIVAEMPDIKPNQVMVHLGKKWSELPLEDRKKYDVMAVEDRKRYLASKEANKKLNKPVKISGYLQFCADERKIKLKFPDLTTKDITAKLGGMWNDYKKNNPQYLKSKYGYEIVEQHYDYEKNEIDKENIIPSSHRRKMVPSIPVSICSSNVKAIQELIGTTKSSKKNKEIKV</sequence>
<feature type="chain" id="PRO_0000048594" description="High mobility group protein homolog">
    <location>
        <begin position="1"/>
        <end position="242"/>
    </location>
</feature>
<feature type="DNA-binding region" description="HMG box 1" evidence="1">
    <location>
        <begin position="54"/>
        <end position="122"/>
    </location>
</feature>
<feature type="DNA-binding region" description="HMG box 2" evidence="1">
    <location>
        <begin position="126"/>
        <end position="197"/>
    </location>
</feature>
<feature type="sequence conflict" description="In Ref. 2; AAK82261." evidence="2" ref="2">
    <original>G</original>
    <variation>A</variation>
    <location>
        <position position="132"/>
    </location>
</feature>
<feature type="sequence conflict" description="In Ref. 2; AAK82261." evidence="2" ref="2">
    <original>KI</original>
    <variation>QGL</variation>
    <location>
        <begin position="142"/>
        <end position="143"/>
    </location>
</feature>
<feature type="sequence conflict" description="In Ref. 1; AAA17843." evidence="2" ref="1">
    <original>SICSSNVKAIQELIGTTKSSKKNKEIKV</original>
    <variation>LVFVLAM</variation>
    <location>
        <begin position="215"/>
        <end position="242"/>
    </location>
</feature>